<proteinExistence type="evidence at transcript level"/>
<keyword id="KW-0067">ATP-binding</keyword>
<keyword id="KW-0256">Endoplasmic reticulum</keyword>
<keyword id="KW-0276">Fatty acid metabolism</keyword>
<keyword id="KW-0325">Glycoprotein</keyword>
<keyword id="KW-0436">Ligase</keyword>
<keyword id="KW-0443">Lipid metabolism</keyword>
<keyword id="KW-0547">Nucleotide-binding</keyword>
<keyword id="KW-1185">Reference proteome</keyword>
<keyword id="KW-0732">Signal</keyword>
<sequence length="673" mass="75581">MINNWLAVGLLVVSGILAFNWKRKHPYGQTVEIGEKPENGGRIRRNSACADHLISFLEDDEIYTLYDSLVKSCKKYGERKCFGERKKDSNGNLGKFEWISYNTYLERCEYIQQGLCELGLKPKSKVGIFSKNRLEWLIVHSASFIQSYCVVSFYETLGVESLSYVTEHAEIGLAFCSAETLQKTLDIAKGVKVLKTIICFDSIDKEHYNIAKELGVTLYTYDEIMKKGKEANGKHKHTPPTPDTLSTIMYTSGTTGPPKGVMITHKNLTSVVCAVSDFIKVYDTDVHYSYLPYAHVLERVVILAAFHFGAAIGIFSGDISNILVEVKLLSPTLFIGVPRVFERIKTNVFKEISKKPALLRTLFNGAYNLKYLSIQHGFKLPIIEKVLDLVFFSKIKQALGGKVRVILSGSAPLSFDTEVFLRVVMCCCVLQGYGASEGCGGDACKRLDDESVGTIGPPFASNEIKLVDVPELGYDSNGEVQTGEVCLRGPSISSGYYKDEEKTREEFKDGWFHTGDIGRWNRDGSLSIVDRKKNIFKLSQGEYVAVEKIETIVVKSEYVEQVCIYGDSQKSCVIAIIHPHPESCSEWAGSKKTDKDIKEICKNQDFIKVVLDDIIKNCKKSGLHGFEIPKAIHLTPEAFSDQNNLLTPSFKLKRHEIKKYFEDEIKKLYSKLD</sequence>
<evidence type="ECO:0000250" key="1"/>
<evidence type="ECO:0000255" key="2"/>
<evidence type="ECO:0000269" key="3">
    <source>
    </source>
</evidence>
<evidence type="ECO:0000269" key="4">
    <source>
    </source>
</evidence>
<evidence type="ECO:0000305" key="5"/>
<dbReference type="EC" id="6.2.1.3"/>
<dbReference type="EMBL" id="AAFI02000005">
    <property type="protein sequence ID" value="EAS66934.1"/>
    <property type="molecule type" value="Genomic_DNA"/>
</dbReference>
<dbReference type="RefSeq" id="XP_001134470.1">
    <property type="nucleotide sequence ID" value="XM_001134470.1"/>
</dbReference>
<dbReference type="SMR" id="Q1ZXQ4"/>
<dbReference type="FunCoup" id="Q1ZXQ4">
    <property type="interactions" value="81"/>
</dbReference>
<dbReference type="STRING" id="44689.Q1ZXQ4"/>
<dbReference type="GlyCosmos" id="Q1ZXQ4">
    <property type="glycosylation" value="1 site, No reported glycans"/>
</dbReference>
<dbReference type="GlyGen" id="Q1ZXQ4">
    <property type="glycosylation" value="1 site"/>
</dbReference>
<dbReference type="PaxDb" id="44689-DDB0231574"/>
<dbReference type="EnsemblProtists" id="EAS66934">
    <property type="protein sequence ID" value="EAS66934"/>
    <property type="gene ID" value="DDB_G0269474"/>
</dbReference>
<dbReference type="GeneID" id="8616941"/>
<dbReference type="KEGG" id="ddi:DDB_G0269474"/>
<dbReference type="dictyBase" id="DDB_G0269474">
    <property type="gene designation" value="fcsB"/>
</dbReference>
<dbReference type="VEuPathDB" id="AmoebaDB:DDB_G0269474"/>
<dbReference type="eggNOG" id="KOG1256">
    <property type="taxonomic scope" value="Eukaryota"/>
</dbReference>
<dbReference type="HOGENOM" id="CLU_000022_45_4_1"/>
<dbReference type="InParanoid" id="Q1ZXQ4"/>
<dbReference type="OMA" id="WYHSIGL"/>
<dbReference type="PhylomeDB" id="Q1ZXQ4"/>
<dbReference type="Reactome" id="R-DDI-2046105">
    <property type="pathway name" value="Linoleic acid (LA) metabolism"/>
</dbReference>
<dbReference type="Reactome" id="R-DDI-2046106">
    <property type="pathway name" value="alpha-linolenic acid (ALA) metabolism"/>
</dbReference>
<dbReference type="Reactome" id="R-DDI-75876">
    <property type="pathway name" value="Synthesis of very long-chain fatty acyl-CoAs"/>
</dbReference>
<dbReference type="PRO" id="PR:Q1ZXQ4"/>
<dbReference type="Proteomes" id="UP000002195">
    <property type="component" value="Chromosome 1"/>
</dbReference>
<dbReference type="GO" id="GO:0005783">
    <property type="term" value="C:endoplasmic reticulum"/>
    <property type="evidence" value="ECO:0000318"/>
    <property type="project" value="GO_Central"/>
</dbReference>
<dbReference type="GO" id="GO:0005789">
    <property type="term" value="C:endoplasmic reticulum membrane"/>
    <property type="evidence" value="ECO:0000314"/>
    <property type="project" value="dictyBase"/>
</dbReference>
<dbReference type="GO" id="GO:0016020">
    <property type="term" value="C:membrane"/>
    <property type="evidence" value="ECO:0000318"/>
    <property type="project" value="GO_Central"/>
</dbReference>
<dbReference type="GO" id="GO:0005778">
    <property type="term" value="C:peroxisomal membrane"/>
    <property type="evidence" value="ECO:0000314"/>
    <property type="project" value="dictyBase"/>
</dbReference>
<dbReference type="GO" id="GO:0005524">
    <property type="term" value="F:ATP binding"/>
    <property type="evidence" value="ECO:0007669"/>
    <property type="project" value="UniProtKB-KW"/>
</dbReference>
<dbReference type="GO" id="GO:0004467">
    <property type="term" value="F:long-chain fatty acid-CoA ligase activity"/>
    <property type="evidence" value="ECO:0000315"/>
    <property type="project" value="dictyBase"/>
</dbReference>
<dbReference type="GO" id="GO:0001676">
    <property type="term" value="P:long-chain fatty acid metabolic process"/>
    <property type="evidence" value="ECO:0000318"/>
    <property type="project" value="GO_Central"/>
</dbReference>
<dbReference type="GO" id="GO:0050766">
    <property type="term" value="P:positive regulation of phagocytosis"/>
    <property type="evidence" value="ECO:0000315"/>
    <property type="project" value="dictyBase"/>
</dbReference>
<dbReference type="CDD" id="cd05927">
    <property type="entry name" value="LC-FACS_euk"/>
    <property type="match status" value="1"/>
</dbReference>
<dbReference type="Gene3D" id="3.40.50.12780">
    <property type="entry name" value="N-terminal domain of ligase-like"/>
    <property type="match status" value="1"/>
</dbReference>
<dbReference type="InterPro" id="IPR020845">
    <property type="entry name" value="AMP-binding_CS"/>
</dbReference>
<dbReference type="InterPro" id="IPR000873">
    <property type="entry name" value="AMP-dep_synth/lig_dom"/>
</dbReference>
<dbReference type="InterPro" id="IPR042099">
    <property type="entry name" value="ANL_N_sf"/>
</dbReference>
<dbReference type="InterPro" id="IPR045311">
    <property type="entry name" value="LC-FACS_euk"/>
</dbReference>
<dbReference type="PANTHER" id="PTHR43272:SF109">
    <property type="entry name" value="FATTY ACYL-COA SYNTHETASE B"/>
    <property type="match status" value="1"/>
</dbReference>
<dbReference type="PANTHER" id="PTHR43272">
    <property type="entry name" value="LONG-CHAIN-FATTY-ACID--COA LIGASE"/>
    <property type="match status" value="1"/>
</dbReference>
<dbReference type="Pfam" id="PF00501">
    <property type="entry name" value="AMP-binding"/>
    <property type="match status" value="1"/>
</dbReference>
<dbReference type="SUPFAM" id="SSF56801">
    <property type="entry name" value="Acetyl-CoA synthetase-like"/>
    <property type="match status" value="1"/>
</dbReference>
<dbReference type="PROSITE" id="PS00455">
    <property type="entry name" value="AMP_BINDING"/>
    <property type="match status" value="1"/>
</dbReference>
<reference key="1">
    <citation type="journal article" date="2005" name="Nature">
        <title>The genome of the social amoeba Dictyostelium discoideum.</title>
        <authorList>
            <person name="Eichinger L."/>
            <person name="Pachebat J.A."/>
            <person name="Gloeckner G."/>
            <person name="Rajandream M.A."/>
            <person name="Sucgang R."/>
            <person name="Berriman M."/>
            <person name="Song J."/>
            <person name="Olsen R."/>
            <person name="Szafranski K."/>
            <person name="Xu Q."/>
            <person name="Tunggal B."/>
            <person name="Kummerfeld S."/>
            <person name="Madera M."/>
            <person name="Konfortov B.A."/>
            <person name="Rivero F."/>
            <person name="Bankier A.T."/>
            <person name="Lehmann R."/>
            <person name="Hamlin N."/>
            <person name="Davies R."/>
            <person name="Gaudet P."/>
            <person name="Fey P."/>
            <person name="Pilcher K."/>
            <person name="Chen G."/>
            <person name="Saunders D."/>
            <person name="Sodergren E.J."/>
            <person name="Davis P."/>
            <person name="Kerhornou A."/>
            <person name="Nie X."/>
            <person name="Hall N."/>
            <person name="Anjard C."/>
            <person name="Hemphill L."/>
            <person name="Bason N."/>
            <person name="Farbrother P."/>
            <person name="Desany B."/>
            <person name="Just E."/>
            <person name="Morio T."/>
            <person name="Rost R."/>
            <person name="Churcher C.M."/>
            <person name="Cooper J."/>
            <person name="Haydock S."/>
            <person name="van Driessche N."/>
            <person name="Cronin A."/>
            <person name="Goodhead I."/>
            <person name="Muzny D.M."/>
            <person name="Mourier T."/>
            <person name="Pain A."/>
            <person name="Lu M."/>
            <person name="Harper D."/>
            <person name="Lindsay R."/>
            <person name="Hauser H."/>
            <person name="James K.D."/>
            <person name="Quiles M."/>
            <person name="Madan Babu M."/>
            <person name="Saito T."/>
            <person name="Buchrieser C."/>
            <person name="Wardroper A."/>
            <person name="Felder M."/>
            <person name="Thangavelu M."/>
            <person name="Johnson D."/>
            <person name="Knights A."/>
            <person name="Loulseged H."/>
            <person name="Mungall K.L."/>
            <person name="Oliver K."/>
            <person name="Price C."/>
            <person name="Quail M.A."/>
            <person name="Urushihara H."/>
            <person name="Hernandez J."/>
            <person name="Rabbinowitsch E."/>
            <person name="Steffen D."/>
            <person name="Sanders M."/>
            <person name="Ma J."/>
            <person name="Kohara Y."/>
            <person name="Sharp S."/>
            <person name="Simmonds M.N."/>
            <person name="Spiegler S."/>
            <person name="Tivey A."/>
            <person name="Sugano S."/>
            <person name="White B."/>
            <person name="Walker D."/>
            <person name="Woodward J.R."/>
            <person name="Winckler T."/>
            <person name="Tanaka Y."/>
            <person name="Shaulsky G."/>
            <person name="Schleicher M."/>
            <person name="Weinstock G.M."/>
            <person name="Rosenthal A."/>
            <person name="Cox E.C."/>
            <person name="Chisholm R.L."/>
            <person name="Gibbs R.A."/>
            <person name="Loomis W.F."/>
            <person name="Platzer M."/>
            <person name="Kay R.R."/>
            <person name="Williams J.G."/>
            <person name="Dear P.H."/>
            <person name="Noegel A.A."/>
            <person name="Barrell B.G."/>
            <person name="Kuspa A."/>
        </authorList>
    </citation>
    <scope>NUCLEOTIDE SEQUENCE [LARGE SCALE GENOMIC DNA]</scope>
    <source>
        <strain>AX4</strain>
    </source>
</reference>
<reference key="2">
    <citation type="journal article" date="2003" name="Eur. J. Cell Biol.">
        <title>A Dictyostelium long chain fatty acyl coenzyme A-synthetase mediates fatty acid retrieval from endosomes.</title>
        <authorList>
            <person name="von Loehneysen K."/>
            <person name="Pawolleck N."/>
            <person name="Ruehling H."/>
            <person name="Maniak M."/>
        </authorList>
    </citation>
    <scope>SUBCELLULAR LOCATION</scope>
</reference>
<reference key="3">
    <citation type="journal article" date="2008" name="BMC Microbiol.">
        <title>Dictyostelium transcriptional responses to Pseudomonas aeruginosa: common and specific effects from PAO1 and PA14 strains.</title>
        <authorList>
            <person name="Carilla-Latorre S."/>
            <person name="Calvo-Garrido J."/>
            <person name="Bloomfield G."/>
            <person name="Skelton J."/>
            <person name="Kay R.R."/>
            <person name="Ivens A."/>
            <person name="Martinez J.L."/>
            <person name="Escalante R."/>
        </authorList>
    </citation>
    <scope>INDUCTION [LARGE SCALE ANALYSIS]</scope>
</reference>
<protein>
    <recommendedName>
        <fullName>Fatty acyl-CoA synthetase B</fullName>
        <ecNumber>6.2.1.3</ecNumber>
    </recommendedName>
    <alternativeName>
        <fullName>Long chain fatty acyl coenzyme A-synthetase 2</fullName>
        <shortName>LC-FACS 2</shortName>
    </alternativeName>
    <alternativeName>
        <fullName>Long-chain-fatty-acid--CoA synthetase 2</fullName>
    </alternativeName>
</protein>
<organism>
    <name type="scientific">Dictyostelium discoideum</name>
    <name type="common">Social amoeba</name>
    <dbReference type="NCBI Taxonomy" id="44689"/>
    <lineage>
        <taxon>Eukaryota</taxon>
        <taxon>Amoebozoa</taxon>
        <taxon>Evosea</taxon>
        <taxon>Eumycetozoa</taxon>
        <taxon>Dictyostelia</taxon>
        <taxon>Dictyosteliales</taxon>
        <taxon>Dictyosteliaceae</taxon>
        <taxon>Dictyostelium</taxon>
    </lineage>
</organism>
<accession>Q1ZXQ4</accession>
<name>FCSB_DICDI</name>
<feature type="signal peptide" evidence="2">
    <location>
        <begin position="1"/>
        <end position="18"/>
    </location>
</feature>
<feature type="chain" id="PRO_0000384439" description="Fatty acyl-CoA synthetase B">
    <location>
        <begin position="19"/>
        <end position="673"/>
    </location>
</feature>
<feature type="glycosylation site" description="N-linked (GlcNAc...) asparagine" evidence="2">
    <location>
        <position position="267"/>
    </location>
</feature>
<gene>
    <name type="primary">fcsB</name>
    <name type="ORF">DDB_G0269474</name>
</gene>
<comment type="function">
    <text evidence="1">Long chain fatty acid acyl-CoA synthetases catalyze the formation of a thiester bond between a free fatty acid and coenzyme A during fatty acid metabolic process.</text>
</comment>
<comment type="catalytic activity">
    <reaction>
        <text>a long-chain fatty acid + ATP + CoA = a long-chain fatty acyl-CoA + AMP + diphosphate</text>
        <dbReference type="Rhea" id="RHEA:15421"/>
        <dbReference type="ChEBI" id="CHEBI:30616"/>
        <dbReference type="ChEBI" id="CHEBI:33019"/>
        <dbReference type="ChEBI" id="CHEBI:57287"/>
        <dbReference type="ChEBI" id="CHEBI:57560"/>
        <dbReference type="ChEBI" id="CHEBI:83139"/>
        <dbReference type="ChEBI" id="CHEBI:456215"/>
        <dbReference type="EC" id="6.2.1.3"/>
    </reaction>
</comment>
<comment type="subcellular location">
    <subcellularLocation>
        <location evidence="3">Endoplasmic reticulum</location>
    </subcellularLocation>
</comment>
<comment type="induction">
    <text evidence="4">Down-regulated by Pseudomonas aeruginosa, PAO1 strain and PA14 strain infection.</text>
</comment>
<comment type="similarity">
    <text evidence="5">Belongs to the ATP-dependent AMP-binding enzyme family.</text>
</comment>